<reference key="1">
    <citation type="journal article" date="2002" name="Nature">
        <title>The genome sequence of Schizosaccharomyces pombe.</title>
        <authorList>
            <person name="Wood V."/>
            <person name="Gwilliam R."/>
            <person name="Rajandream M.A."/>
            <person name="Lyne M.H."/>
            <person name="Lyne R."/>
            <person name="Stewart A."/>
            <person name="Sgouros J.G."/>
            <person name="Peat N."/>
            <person name="Hayles J."/>
            <person name="Baker S.G."/>
            <person name="Basham D."/>
            <person name="Bowman S."/>
            <person name="Brooks K."/>
            <person name="Brown D."/>
            <person name="Brown S."/>
            <person name="Chillingworth T."/>
            <person name="Churcher C.M."/>
            <person name="Collins M."/>
            <person name="Connor R."/>
            <person name="Cronin A."/>
            <person name="Davis P."/>
            <person name="Feltwell T."/>
            <person name="Fraser A."/>
            <person name="Gentles S."/>
            <person name="Goble A."/>
            <person name="Hamlin N."/>
            <person name="Harris D.E."/>
            <person name="Hidalgo J."/>
            <person name="Hodgson G."/>
            <person name="Holroyd S."/>
            <person name="Hornsby T."/>
            <person name="Howarth S."/>
            <person name="Huckle E.J."/>
            <person name="Hunt S."/>
            <person name="Jagels K."/>
            <person name="James K.D."/>
            <person name="Jones L."/>
            <person name="Jones M."/>
            <person name="Leather S."/>
            <person name="McDonald S."/>
            <person name="McLean J."/>
            <person name="Mooney P."/>
            <person name="Moule S."/>
            <person name="Mungall K.L."/>
            <person name="Murphy L.D."/>
            <person name="Niblett D."/>
            <person name="Odell C."/>
            <person name="Oliver K."/>
            <person name="O'Neil S."/>
            <person name="Pearson D."/>
            <person name="Quail M.A."/>
            <person name="Rabbinowitsch E."/>
            <person name="Rutherford K.M."/>
            <person name="Rutter S."/>
            <person name="Saunders D."/>
            <person name="Seeger K."/>
            <person name="Sharp S."/>
            <person name="Skelton J."/>
            <person name="Simmonds M.N."/>
            <person name="Squares R."/>
            <person name="Squares S."/>
            <person name="Stevens K."/>
            <person name="Taylor K."/>
            <person name="Taylor R.G."/>
            <person name="Tivey A."/>
            <person name="Walsh S.V."/>
            <person name="Warren T."/>
            <person name="Whitehead S."/>
            <person name="Woodward J.R."/>
            <person name="Volckaert G."/>
            <person name="Aert R."/>
            <person name="Robben J."/>
            <person name="Grymonprez B."/>
            <person name="Weltjens I."/>
            <person name="Vanstreels E."/>
            <person name="Rieger M."/>
            <person name="Schaefer M."/>
            <person name="Mueller-Auer S."/>
            <person name="Gabel C."/>
            <person name="Fuchs M."/>
            <person name="Duesterhoeft A."/>
            <person name="Fritzc C."/>
            <person name="Holzer E."/>
            <person name="Moestl D."/>
            <person name="Hilbert H."/>
            <person name="Borzym K."/>
            <person name="Langer I."/>
            <person name="Beck A."/>
            <person name="Lehrach H."/>
            <person name="Reinhardt R."/>
            <person name="Pohl T.M."/>
            <person name="Eger P."/>
            <person name="Zimmermann W."/>
            <person name="Wedler H."/>
            <person name="Wambutt R."/>
            <person name="Purnelle B."/>
            <person name="Goffeau A."/>
            <person name="Cadieu E."/>
            <person name="Dreano S."/>
            <person name="Gloux S."/>
            <person name="Lelaure V."/>
            <person name="Mottier S."/>
            <person name="Galibert F."/>
            <person name="Aves S.J."/>
            <person name="Xiang Z."/>
            <person name="Hunt C."/>
            <person name="Moore K."/>
            <person name="Hurst S.M."/>
            <person name="Lucas M."/>
            <person name="Rochet M."/>
            <person name="Gaillardin C."/>
            <person name="Tallada V.A."/>
            <person name="Garzon A."/>
            <person name="Thode G."/>
            <person name="Daga R.R."/>
            <person name="Cruzado L."/>
            <person name="Jimenez J."/>
            <person name="Sanchez M."/>
            <person name="del Rey F."/>
            <person name="Benito J."/>
            <person name="Dominguez A."/>
            <person name="Revuelta J.L."/>
            <person name="Moreno S."/>
            <person name="Armstrong J."/>
            <person name="Forsburg S.L."/>
            <person name="Cerutti L."/>
            <person name="Lowe T."/>
            <person name="McCombie W.R."/>
            <person name="Paulsen I."/>
            <person name="Potashkin J."/>
            <person name="Shpakovski G.V."/>
            <person name="Ussery D."/>
            <person name="Barrell B.G."/>
            <person name="Nurse P."/>
        </authorList>
    </citation>
    <scope>NUCLEOTIDE SEQUENCE [LARGE SCALE GENOMIC DNA]</scope>
    <source>
        <strain>972 / ATCC 24843</strain>
    </source>
</reference>
<reference key="2">
    <citation type="journal article" date="2011" name="Science">
        <title>Comparative functional genomics of the fission yeasts.</title>
        <authorList>
            <person name="Rhind N."/>
            <person name="Chen Z."/>
            <person name="Yassour M."/>
            <person name="Thompson D.A."/>
            <person name="Haas B.J."/>
            <person name="Habib N."/>
            <person name="Wapinski I."/>
            <person name="Roy S."/>
            <person name="Lin M.F."/>
            <person name="Heiman D.I."/>
            <person name="Young S.K."/>
            <person name="Furuya K."/>
            <person name="Guo Y."/>
            <person name="Pidoux A."/>
            <person name="Chen H.M."/>
            <person name="Robbertse B."/>
            <person name="Goldberg J.M."/>
            <person name="Aoki K."/>
            <person name="Bayne E.H."/>
            <person name="Berlin A.M."/>
            <person name="Desjardins C.A."/>
            <person name="Dobbs E."/>
            <person name="Dukaj L."/>
            <person name="Fan L."/>
            <person name="FitzGerald M.G."/>
            <person name="French C."/>
            <person name="Gujja S."/>
            <person name="Hansen K."/>
            <person name="Keifenheim D."/>
            <person name="Levin J.Z."/>
            <person name="Mosher R.A."/>
            <person name="Mueller C.A."/>
            <person name="Pfiffner J."/>
            <person name="Priest M."/>
            <person name="Russ C."/>
            <person name="Smialowska A."/>
            <person name="Swoboda P."/>
            <person name="Sykes S.M."/>
            <person name="Vaughn M."/>
            <person name="Vengrova S."/>
            <person name="Yoder R."/>
            <person name="Zeng Q."/>
            <person name="Allshire R."/>
            <person name="Baulcombe D."/>
            <person name="Birren B.W."/>
            <person name="Brown W."/>
            <person name="Ekwall K."/>
            <person name="Kellis M."/>
            <person name="Leatherwood J."/>
            <person name="Levin H."/>
            <person name="Margalit H."/>
            <person name="Martienssen R."/>
            <person name="Nieduszynski C.A."/>
            <person name="Spatafora J.W."/>
            <person name="Friedman N."/>
            <person name="Dalgaard J.Z."/>
            <person name="Baumann P."/>
            <person name="Niki H."/>
            <person name="Regev A."/>
            <person name="Nusbaum C."/>
        </authorList>
    </citation>
    <scope>REVISION OF GENE MODEL</scope>
</reference>
<reference key="3">
    <citation type="journal article" date="2006" name="Nat. Biotechnol.">
        <title>ORFeome cloning and global analysis of protein localization in the fission yeast Schizosaccharomyces pombe.</title>
        <authorList>
            <person name="Matsuyama A."/>
            <person name="Arai R."/>
            <person name="Yashiroda Y."/>
            <person name="Shirai A."/>
            <person name="Kamata A."/>
            <person name="Sekido S."/>
            <person name="Kobayashi Y."/>
            <person name="Hashimoto A."/>
            <person name="Hamamoto M."/>
            <person name="Hiraoka Y."/>
            <person name="Horinouchi S."/>
            <person name="Yoshida M."/>
        </authorList>
    </citation>
    <scope>SUBCELLULAR LOCATION [LARGE SCALE ANALYSIS]</scope>
</reference>
<feature type="chain" id="PRO_0000304091" description="Uncharacterized protein C5E4.10c">
    <location>
        <begin position="1"/>
        <end position="198"/>
    </location>
</feature>
<feature type="region of interest" description="Disordered" evidence="2">
    <location>
        <begin position="144"/>
        <end position="198"/>
    </location>
</feature>
<feature type="coiled-coil region" evidence="1">
    <location>
        <begin position="20"/>
        <end position="58"/>
    </location>
</feature>
<feature type="compositionally biased region" description="Basic residues" evidence="2">
    <location>
        <begin position="176"/>
        <end position="188"/>
    </location>
</feature>
<feature type="compositionally biased region" description="Polar residues" evidence="2">
    <location>
        <begin position="189"/>
        <end position="198"/>
    </location>
</feature>
<keyword id="KW-0175">Coiled coil</keyword>
<keyword id="KW-0539">Nucleus</keyword>
<keyword id="KW-1185">Reference proteome</keyword>
<name>YJIA_SCHPO</name>
<accession>Q9P7Z6</accession>
<protein>
    <recommendedName>
        <fullName>Uncharacterized protein C5E4.10c</fullName>
    </recommendedName>
</protein>
<sequence length="198" mass="23914">MPLNLLKHKSWNVYNEKNIERVRRDEELARLSADKEQAKNDLEESKRRIARLRGTVYEEDSKETEPKVEFANFWAEQEEKERKRQKVYSENRHDLEIMKERHGLGPLPWYMKTDKISIDETSNNMSSKYRAPQDDPMFLVEKLLSNRKTKNPESDRRRQSRKKKSTQIQASDEMKHRRHHVHKVHHYSQKQSSSTTRR</sequence>
<comment type="subcellular location">
    <subcellularLocation>
        <location evidence="3">Nucleus</location>
        <location evidence="3">Nucleolus</location>
    </subcellularLocation>
</comment>
<proteinExistence type="predicted"/>
<evidence type="ECO:0000255" key="1"/>
<evidence type="ECO:0000256" key="2">
    <source>
        <dbReference type="SAM" id="MobiDB-lite"/>
    </source>
</evidence>
<evidence type="ECO:0000269" key="3">
    <source>
    </source>
</evidence>
<dbReference type="EMBL" id="CU329672">
    <property type="protein sequence ID" value="CAB71863.2"/>
    <property type="molecule type" value="Genomic_DNA"/>
</dbReference>
<dbReference type="RefSeq" id="NP_587905.2">
    <property type="nucleotide sequence ID" value="NM_001022897.2"/>
</dbReference>
<dbReference type="SMR" id="Q9P7Z6"/>
<dbReference type="BioGRID" id="275942">
    <property type="interactions" value="10"/>
</dbReference>
<dbReference type="STRING" id="284812.Q9P7Z6"/>
<dbReference type="PaxDb" id="4896-SPCC5E4.10c.1"/>
<dbReference type="EnsemblFungi" id="SPCC5E4.10c.1">
    <property type="protein sequence ID" value="SPCC5E4.10c.1:pep"/>
    <property type="gene ID" value="SPCC5E4.10c"/>
</dbReference>
<dbReference type="KEGG" id="spo:2539376"/>
<dbReference type="PomBase" id="SPCC5E4.10c"/>
<dbReference type="VEuPathDB" id="FungiDB:SPCC5E4.10c"/>
<dbReference type="eggNOG" id="ENOG502RR25">
    <property type="taxonomic scope" value="Eukaryota"/>
</dbReference>
<dbReference type="HOGENOM" id="CLU_127820_0_0_1"/>
<dbReference type="InParanoid" id="Q9P7Z6"/>
<dbReference type="OMA" id="LGPLPWY"/>
<dbReference type="PRO" id="PR:Q9P7Z6"/>
<dbReference type="Proteomes" id="UP000002485">
    <property type="component" value="Chromosome III"/>
</dbReference>
<dbReference type="GO" id="GO:0005730">
    <property type="term" value="C:nucleolus"/>
    <property type="evidence" value="ECO:0007005"/>
    <property type="project" value="PomBase"/>
</dbReference>
<dbReference type="GO" id="GO:0005634">
    <property type="term" value="C:nucleus"/>
    <property type="evidence" value="ECO:0007005"/>
    <property type="project" value="PomBase"/>
</dbReference>
<dbReference type="InterPro" id="IPR039875">
    <property type="entry name" value="LENG1-like"/>
</dbReference>
<dbReference type="PANTHER" id="PTHR22093">
    <property type="entry name" value="LEUKOCYTE RECEPTOR CLUSTER LRC MEMBER 1"/>
    <property type="match status" value="1"/>
</dbReference>
<dbReference type="PANTHER" id="PTHR22093:SF0">
    <property type="entry name" value="LEUKOCYTE RECEPTOR CLUSTER MEMBER 1"/>
    <property type="match status" value="1"/>
</dbReference>
<gene>
    <name type="ORF">SPCC5E4.10c</name>
</gene>
<organism>
    <name type="scientific">Schizosaccharomyces pombe (strain 972 / ATCC 24843)</name>
    <name type="common">Fission yeast</name>
    <dbReference type="NCBI Taxonomy" id="284812"/>
    <lineage>
        <taxon>Eukaryota</taxon>
        <taxon>Fungi</taxon>
        <taxon>Dikarya</taxon>
        <taxon>Ascomycota</taxon>
        <taxon>Taphrinomycotina</taxon>
        <taxon>Schizosaccharomycetes</taxon>
        <taxon>Schizosaccharomycetales</taxon>
        <taxon>Schizosaccharomycetaceae</taxon>
        <taxon>Schizosaccharomyces</taxon>
    </lineage>
</organism>